<accession>P11873</accession>
<accession>P40627</accession>
<protein>
    <recommendedName>
        <fullName>High mobility group protein C</fullName>
    </recommendedName>
    <alternativeName>
        <fullName>Non-histone chromosomal protein LG-1</fullName>
    </alternativeName>
</protein>
<sequence length="100" mass="11679">AKSKDDSKPAPPKRPLSAFFLFKQHNYEQVKKENPNAKITELTSMIAEKWKAVGEKEKKKYETLQSEAKAKYEKDMQAYEKKYGKPEKQKKIKKNKKGSK</sequence>
<keyword id="KW-0158">Chromosome</keyword>
<keyword id="KW-0903">Direct protein sequencing</keyword>
<keyword id="KW-0238">DNA-binding</keyword>
<keyword id="KW-0539">Nucleus</keyword>
<feature type="chain" id="PRO_0000048562" description="High mobility group protein C">
    <location>
        <begin position="1"/>
        <end position="100"/>
    </location>
</feature>
<feature type="DNA-binding region" description="HMG box" evidence="1">
    <location>
        <begin position="12"/>
        <end position="80"/>
    </location>
</feature>
<feature type="region of interest" description="Disordered" evidence="2">
    <location>
        <begin position="81"/>
        <end position="100"/>
    </location>
</feature>
<feature type="compositionally biased region" description="Basic residues" evidence="2">
    <location>
        <begin position="90"/>
        <end position="100"/>
    </location>
</feature>
<feature type="sequence conflict" description="In Ref. 3; AAA30120." evidence="3" ref="3">
    <original>DM</original>
    <variation>AL</variation>
    <location>
        <begin position="75"/>
        <end position="76"/>
    </location>
</feature>
<reference key="1">
    <citation type="journal article" date="1987" name="Nucleic Acids Res.">
        <title>The complete amino acid sequence of an HMG-like protein isolated from the macronucleus of Tetrahymena.</title>
        <authorList>
            <person name="Roth S.Y."/>
            <person name="Schulman I.G."/>
            <person name="Cook R.G."/>
            <person name="Allis C.D."/>
        </authorList>
    </citation>
    <scope>PROTEIN SEQUENCE</scope>
</reference>
<reference key="2">
    <citation type="journal article" date="1987" name="J. Cell Biol.">
        <title>Tetrahymena contain two distinct and unusual high mobility group (HMG)-like proteins.</title>
        <authorList>
            <person name="Schulman I.G."/>
            <person name="Cook R.G."/>
            <person name="Richman R."/>
            <person name="Allis C.D."/>
        </authorList>
    </citation>
    <scope>PROTEIN SEQUENCE OF 1-47</scope>
</reference>
<reference key="3">
    <citation type="journal article" date="1991" name="Mol. Cell. Biol.">
        <title>Macronuclei and micronuclei in Tetrahymena thermophila contain high-mobility-group-like chromosomal proteins containing a highly conserved eleven-amino-acid putative DNA-binding sequence.</title>
        <authorList>
            <person name="Schulman I.G."/>
            <person name="Wang T."/>
            <person name="Wu M."/>
            <person name="Bowen J."/>
            <person name="Cook R.G."/>
            <person name="Gorovsky M.A."/>
            <person name="Allis C.D."/>
        </authorList>
    </citation>
    <scope>NUCLEOTIDE SEQUENCE [GENOMIC DNA] OF 9-100</scope>
</reference>
<name>HMGC_TETTH</name>
<evidence type="ECO:0000255" key="1">
    <source>
        <dbReference type="PROSITE-ProRule" id="PRU00267"/>
    </source>
</evidence>
<evidence type="ECO:0000256" key="2">
    <source>
        <dbReference type="SAM" id="MobiDB-lite"/>
    </source>
</evidence>
<evidence type="ECO:0000305" key="3"/>
<comment type="subcellular location">
    <subcellularLocation>
        <location>Nucleus</location>
    </subcellularLocation>
    <subcellularLocation>
        <location>Chromosome</location>
    </subcellularLocation>
    <text>Macronuclei.</text>
</comment>
<organism>
    <name type="scientific">Tetrahymena thermophila</name>
    <dbReference type="NCBI Taxonomy" id="5911"/>
    <lineage>
        <taxon>Eukaryota</taxon>
        <taxon>Sar</taxon>
        <taxon>Alveolata</taxon>
        <taxon>Ciliophora</taxon>
        <taxon>Intramacronucleata</taxon>
        <taxon>Oligohymenophorea</taxon>
        <taxon>Hymenostomatida</taxon>
        <taxon>Tetrahymenina</taxon>
        <taxon>Tetrahymenidae</taxon>
        <taxon>Tetrahymena</taxon>
    </lineage>
</organism>
<dbReference type="EMBL" id="M63424">
    <property type="protein sequence ID" value="AAA30120.1"/>
    <property type="molecule type" value="Genomic_DNA"/>
</dbReference>
<dbReference type="PIR" id="A26989">
    <property type="entry name" value="A26989"/>
</dbReference>
<dbReference type="SMR" id="P11873"/>
<dbReference type="GO" id="GO:0005694">
    <property type="term" value="C:chromosome"/>
    <property type="evidence" value="ECO:0007669"/>
    <property type="project" value="UniProtKB-SubCell"/>
</dbReference>
<dbReference type="GO" id="GO:0005634">
    <property type="term" value="C:nucleus"/>
    <property type="evidence" value="ECO:0007669"/>
    <property type="project" value="UniProtKB-SubCell"/>
</dbReference>
<dbReference type="GO" id="GO:0003677">
    <property type="term" value="F:DNA binding"/>
    <property type="evidence" value="ECO:0007669"/>
    <property type="project" value="UniProtKB-KW"/>
</dbReference>
<dbReference type="Gene3D" id="1.10.30.10">
    <property type="entry name" value="High mobility group box domain"/>
    <property type="match status" value="1"/>
</dbReference>
<dbReference type="InterPro" id="IPR009071">
    <property type="entry name" value="HMG_box_dom"/>
</dbReference>
<dbReference type="InterPro" id="IPR036910">
    <property type="entry name" value="HMG_box_dom_sf"/>
</dbReference>
<dbReference type="InterPro" id="IPR050342">
    <property type="entry name" value="HMGB"/>
</dbReference>
<dbReference type="PANTHER" id="PTHR48112:SF32">
    <property type="entry name" value="HIGH MOBILITY GROUP PROTEIN B3"/>
    <property type="match status" value="1"/>
</dbReference>
<dbReference type="PANTHER" id="PTHR48112">
    <property type="entry name" value="HIGH MOBILITY GROUP PROTEIN DSP1"/>
    <property type="match status" value="1"/>
</dbReference>
<dbReference type="Pfam" id="PF00505">
    <property type="entry name" value="HMG_box"/>
    <property type="match status" value="1"/>
</dbReference>
<dbReference type="PRINTS" id="PR00886">
    <property type="entry name" value="HIGHMOBLTY12"/>
</dbReference>
<dbReference type="SMART" id="SM00398">
    <property type="entry name" value="HMG"/>
    <property type="match status" value="1"/>
</dbReference>
<dbReference type="SUPFAM" id="SSF47095">
    <property type="entry name" value="HMG-box"/>
    <property type="match status" value="1"/>
</dbReference>
<dbReference type="PROSITE" id="PS50118">
    <property type="entry name" value="HMG_BOX_2"/>
    <property type="match status" value="1"/>
</dbReference>
<proteinExistence type="evidence at protein level"/>